<name>HIR3B_HIRME</name>
<feature type="chain" id="PRO_0000195650" description="Hirudin-3B">
    <location>
        <begin position="1"/>
        <end position="65"/>
    </location>
</feature>
<feature type="region of interest" description="Interaction with thrombin active site" evidence="1">
    <location>
        <begin position="1"/>
        <end position="3"/>
    </location>
</feature>
<feature type="region of interest" description="Disordered" evidence="2">
    <location>
        <begin position="40"/>
        <end position="65"/>
    </location>
</feature>
<feature type="region of interest" description="Interaction with fibrinogen-binding exosite of thrombin" evidence="1">
    <location>
        <begin position="55"/>
        <end position="65"/>
    </location>
</feature>
<feature type="compositionally biased region" description="Acidic residues" evidence="2">
    <location>
        <begin position="55"/>
        <end position="65"/>
    </location>
</feature>
<feature type="modified residue" description="Sulfotyrosine" evidence="1">
    <location>
        <position position="63"/>
    </location>
</feature>
<feature type="glycosylation site" description="O-linked (GalNAc...) threonine" evidence="1">
    <location>
        <position position="45"/>
    </location>
</feature>
<feature type="disulfide bond" evidence="1">
    <location>
        <begin position="6"/>
        <end position="14"/>
    </location>
</feature>
<feature type="disulfide bond" evidence="1">
    <location>
        <begin position="16"/>
        <end position="28"/>
    </location>
</feature>
<feature type="disulfide bond" evidence="1">
    <location>
        <begin position="22"/>
        <end position="39"/>
    </location>
</feature>
<proteinExistence type="evidence at protein level"/>
<evidence type="ECO:0000250" key="1"/>
<evidence type="ECO:0000256" key="2">
    <source>
        <dbReference type="SAM" id="MobiDB-lite"/>
    </source>
</evidence>
<evidence type="ECO:0000305" key="3"/>
<organism>
    <name type="scientific">Hirudo medicinalis</name>
    <name type="common">Medicinal leech</name>
    <dbReference type="NCBI Taxonomy" id="6421"/>
    <lineage>
        <taxon>Eukaryota</taxon>
        <taxon>Metazoa</taxon>
        <taxon>Spiralia</taxon>
        <taxon>Lophotrochozoa</taxon>
        <taxon>Annelida</taxon>
        <taxon>Clitellata</taxon>
        <taxon>Hirudinea</taxon>
        <taxon>Hirudinida</taxon>
        <taxon>Hirudiniformes</taxon>
        <taxon>Hirudinidae</taxon>
        <taxon>Hirudo</taxon>
    </lineage>
</organism>
<comment type="function">
    <text>Hirudin is a potent thrombin-specific protease inhibitor. It forms a stable non-covalent complex with alpha-thrombin, thereby abolishing its ability to cleave fibrinogen.</text>
</comment>
<comment type="subcellular location">
    <subcellularLocation>
        <location>Secreted</location>
    </subcellularLocation>
</comment>
<comment type="similarity">
    <text evidence="3">Belongs to the protease inhibitor I14 (hirudin) family.</text>
</comment>
<dbReference type="PIR" id="S05677">
    <property type="entry name" value="S05677"/>
</dbReference>
<dbReference type="PDB" id="1AIX">
    <property type="method" value="X-ray"/>
    <property type="resolution" value="2.10 A"/>
    <property type="chains" value="I=55-64"/>
</dbReference>
<dbReference type="PDBsum" id="1AIX"/>
<dbReference type="SMR" id="P28510"/>
<dbReference type="Allergome" id="9843">
    <property type="allergen name" value="Hir me Hirudin"/>
</dbReference>
<dbReference type="MEROPS" id="I14.001"/>
<dbReference type="GO" id="GO:0005576">
    <property type="term" value="C:extracellular region"/>
    <property type="evidence" value="ECO:0007669"/>
    <property type="project" value="UniProtKB-SubCell"/>
</dbReference>
<dbReference type="GO" id="GO:0004867">
    <property type="term" value="F:serine-type endopeptidase inhibitor activity"/>
    <property type="evidence" value="ECO:0007669"/>
    <property type="project" value="UniProtKB-KW"/>
</dbReference>
<dbReference type="FunFam" id="2.70.10.10:FF:000001">
    <property type="entry name" value="Hirudin variant-1"/>
    <property type="match status" value="1"/>
</dbReference>
<dbReference type="Gene3D" id="2.70.10.10">
    <property type="entry name" value="Thrombin Inhibitor (Hirudin), subunit I"/>
    <property type="match status" value="1"/>
</dbReference>
<dbReference type="InterPro" id="IPR024793">
    <property type="entry name" value="Hirudin"/>
</dbReference>
<dbReference type="InterPro" id="IPR011061">
    <property type="entry name" value="Hirudin/antistatin"/>
</dbReference>
<dbReference type="InterPro" id="IPR000429">
    <property type="entry name" value="Prot_inh_hirudin"/>
</dbReference>
<dbReference type="Pfam" id="PF00713">
    <property type="entry name" value="Hirudin"/>
    <property type="match status" value="1"/>
</dbReference>
<dbReference type="PIRSF" id="PIRSF001640">
    <property type="entry name" value="Hirudin"/>
    <property type="match status" value="1"/>
</dbReference>
<dbReference type="PRINTS" id="PR00777">
    <property type="entry name" value="HIRUDIN"/>
</dbReference>
<dbReference type="SUPFAM" id="SSF57262">
    <property type="entry name" value="Leech antihemostatic proteins"/>
    <property type="match status" value="1"/>
</dbReference>
<keyword id="KW-0002">3D-structure</keyword>
<keyword id="KW-0903">Direct protein sequencing</keyword>
<keyword id="KW-1015">Disulfide bond</keyword>
<keyword id="KW-0325">Glycoprotein</keyword>
<keyword id="KW-0646">Protease inhibitor</keyword>
<keyword id="KW-0964">Secreted</keyword>
<keyword id="KW-0722">Serine protease inhibitor</keyword>
<keyword id="KW-0765">Sulfation</keyword>
<accession>P28510</accession>
<reference key="1">
    <citation type="journal article" date="1989" name="FEBS Lett.">
        <title>Primary structures of new 'iso-hirudins'.</title>
        <authorList>
            <person name="Scharf M."/>
            <person name="Engels J."/>
            <person name="Tripier D."/>
        </authorList>
    </citation>
    <scope>PROTEIN SEQUENCE</scope>
</reference>
<protein>
    <recommendedName>
        <fullName>Hirudin-3B</fullName>
    </recommendedName>
    <alternativeName>
        <fullName>Hirudin IIIB</fullName>
    </alternativeName>
</protein>
<sequence>VVYTDCTESGQNLCLCQDSNVCGQGNKCILGSNGEKNQCVTGEGTPKPQSHNDGDFEEIPEEYLQ</sequence>